<gene>
    <name type="ordered locus">TC_0241</name>
</gene>
<protein>
    <recommendedName>
        <fullName>UPF0056 membrane protein TC_0241</fullName>
    </recommendedName>
</protein>
<proteinExistence type="inferred from homology"/>
<sequence length="204" mass="22771">MLHSLFRLTLLFYALFNSLGSLPVFVALLKKFSFRKQQRIILRECIFALLTLILFITFGQGFFRLLEVSLPAFQLTGGILLGSLAINMMKALPSQEETFDQYEDEPIFYPLAFPVITGPATITSTLGHMEEGIFPKELVLGAIMLAWAFSLITLFFSSSINRLFGQMGLLALERLFGISLALMAGNLMLKAISTAFNIGYYVMA</sequence>
<evidence type="ECO:0000255" key="1"/>
<evidence type="ECO:0000305" key="2"/>
<keyword id="KW-1003">Cell membrane</keyword>
<keyword id="KW-0472">Membrane</keyword>
<keyword id="KW-0812">Transmembrane</keyword>
<keyword id="KW-1133">Transmembrane helix</keyword>
<reference key="1">
    <citation type="journal article" date="2000" name="Nucleic Acids Res.">
        <title>Genome sequences of Chlamydia trachomatis MoPn and Chlamydia pneumoniae AR39.</title>
        <authorList>
            <person name="Read T.D."/>
            <person name="Brunham R.C."/>
            <person name="Shen C."/>
            <person name="Gill S.R."/>
            <person name="Heidelberg J.F."/>
            <person name="White O."/>
            <person name="Hickey E.K."/>
            <person name="Peterson J.D."/>
            <person name="Utterback T.R."/>
            <person name="Berry K.J."/>
            <person name="Bass S."/>
            <person name="Linher K.D."/>
            <person name="Weidman J.F."/>
            <person name="Khouri H.M."/>
            <person name="Craven B."/>
            <person name="Bowman C."/>
            <person name="Dodson R.J."/>
            <person name="Gwinn M.L."/>
            <person name="Nelson W.C."/>
            <person name="DeBoy R.T."/>
            <person name="Kolonay J.F."/>
            <person name="McClarty G."/>
            <person name="Salzberg S.L."/>
            <person name="Eisen J.A."/>
            <person name="Fraser C.M."/>
        </authorList>
    </citation>
    <scope>NUCLEOTIDE SEQUENCE [LARGE SCALE GENOMIC DNA]</scope>
    <source>
        <strain>MoPn / Nigg</strain>
    </source>
</reference>
<comment type="subcellular location">
    <subcellularLocation>
        <location evidence="2">Cell membrane</location>
        <topology evidence="2">Multi-pass membrane protein</topology>
    </subcellularLocation>
</comment>
<comment type="similarity">
    <text evidence="2">Belongs to the UPF0056 (MarC) family.</text>
</comment>
<feature type="chain" id="PRO_0000156913" description="UPF0056 membrane protein TC_0241">
    <location>
        <begin position="1"/>
        <end position="204"/>
    </location>
</feature>
<feature type="transmembrane region" description="Helical" evidence="1">
    <location>
        <begin position="8"/>
        <end position="28"/>
    </location>
</feature>
<feature type="transmembrane region" description="Helical" evidence="1">
    <location>
        <begin position="46"/>
        <end position="66"/>
    </location>
</feature>
<feature type="transmembrane region" description="Helical" evidence="1">
    <location>
        <begin position="68"/>
        <end position="88"/>
    </location>
</feature>
<feature type="transmembrane region" description="Helical" evidence="1">
    <location>
        <begin position="107"/>
        <end position="127"/>
    </location>
</feature>
<feature type="transmembrane region" description="Helical" evidence="1">
    <location>
        <begin position="138"/>
        <end position="158"/>
    </location>
</feature>
<feature type="transmembrane region" description="Helical" evidence="1">
    <location>
        <begin position="176"/>
        <end position="196"/>
    </location>
</feature>
<organism>
    <name type="scientific">Chlamydia muridarum (strain MoPn / Nigg)</name>
    <dbReference type="NCBI Taxonomy" id="243161"/>
    <lineage>
        <taxon>Bacteria</taxon>
        <taxon>Pseudomonadati</taxon>
        <taxon>Chlamydiota</taxon>
        <taxon>Chlamydiia</taxon>
        <taxon>Chlamydiales</taxon>
        <taxon>Chlamydiaceae</taxon>
        <taxon>Chlamydia/Chlamydophila group</taxon>
        <taxon>Chlamydia</taxon>
    </lineage>
</organism>
<name>Y241_CHLMU</name>
<accession>Q9PL67</accession>
<dbReference type="EMBL" id="AE002160">
    <property type="protein sequence ID" value="AAF39112.1"/>
    <property type="molecule type" value="Genomic_DNA"/>
</dbReference>
<dbReference type="PIR" id="H81724">
    <property type="entry name" value="H81724"/>
</dbReference>
<dbReference type="RefSeq" id="WP_010229920.1">
    <property type="nucleotide sequence ID" value="NZ_CP063055.1"/>
</dbReference>
<dbReference type="GeneID" id="1246410"/>
<dbReference type="KEGG" id="cmu:TC_0241"/>
<dbReference type="eggNOG" id="COG2095">
    <property type="taxonomic scope" value="Bacteria"/>
</dbReference>
<dbReference type="HOGENOM" id="CLU_079909_1_1_0"/>
<dbReference type="OrthoDB" id="19140at2"/>
<dbReference type="Proteomes" id="UP000000800">
    <property type="component" value="Chromosome"/>
</dbReference>
<dbReference type="GO" id="GO:0005886">
    <property type="term" value="C:plasma membrane"/>
    <property type="evidence" value="ECO:0007669"/>
    <property type="project" value="UniProtKB-SubCell"/>
</dbReference>
<dbReference type="InterPro" id="IPR002771">
    <property type="entry name" value="Multi_antbiot-R_MarC"/>
</dbReference>
<dbReference type="PANTHER" id="PTHR33508">
    <property type="entry name" value="UPF0056 MEMBRANE PROTEIN YHCE"/>
    <property type="match status" value="1"/>
</dbReference>
<dbReference type="PANTHER" id="PTHR33508:SF1">
    <property type="entry name" value="UPF0056 MEMBRANE PROTEIN YHCE"/>
    <property type="match status" value="1"/>
</dbReference>
<dbReference type="Pfam" id="PF01914">
    <property type="entry name" value="MarC"/>
    <property type="match status" value="1"/>
</dbReference>